<protein>
    <recommendedName>
        <fullName evidence="1">Glutamyl-tRNA reductase 2</fullName>
        <shortName evidence="1">GluTR 2</shortName>
        <ecNumber evidence="1">1.2.1.70</ecNumber>
    </recommendedName>
</protein>
<proteinExistence type="inferred from homology"/>
<keyword id="KW-0521">NADP</keyword>
<keyword id="KW-0560">Oxidoreductase</keyword>
<keyword id="KW-0627">Porphyrin biosynthesis</keyword>
<reference key="1">
    <citation type="submission" date="2007-04" db="EMBL/GenBank/DDBJ databases">
        <title>Complete sequence of Pyrobaculum arsenaticum DSM 13514.</title>
        <authorList>
            <consortium name="US DOE Joint Genome Institute"/>
            <person name="Copeland A."/>
            <person name="Lucas S."/>
            <person name="Lapidus A."/>
            <person name="Barry K."/>
            <person name="Glavina del Rio T."/>
            <person name="Dalin E."/>
            <person name="Tice H."/>
            <person name="Pitluck S."/>
            <person name="Chain P."/>
            <person name="Malfatti S."/>
            <person name="Shin M."/>
            <person name="Vergez L."/>
            <person name="Schmutz J."/>
            <person name="Larimer F."/>
            <person name="Land M."/>
            <person name="Hauser L."/>
            <person name="Kyrpides N."/>
            <person name="Mikhailova N."/>
            <person name="Cozen A.E."/>
            <person name="Fitz-Gibbon S.T."/>
            <person name="House C.H."/>
            <person name="Saltikov C."/>
            <person name="Lowe T.M."/>
            <person name="Richardson P."/>
        </authorList>
    </citation>
    <scope>NUCLEOTIDE SEQUENCE [LARGE SCALE GENOMIC DNA]</scope>
    <source>
        <strain>ATCC 700994 / DSM 13514 / JCM 11321 / PZ6</strain>
    </source>
</reference>
<dbReference type="EC" id="1.2.1.70" evidence="1"/>
<dbReference type="EMBL" id="CP000660">
    <property type="protein sequence ID" value="ABP51805.1"/>
    <property type="molecule type" value="Genomic_DNA"/>
</dbReference>
<dbReference type="SMR" id="A4WN38"/>
<dbReference type="STRING" id="340102.Pars_2261"/>
<dbReference type="KEGG" id="pas:Pars_2261"/>
<dbReference type="HOGENOM" id="CLU_035113_0_0_2"/>
<dbReference type="OrthoDB" id="4562at2157"/>
<dbReference type="PhylomeDB" id="A4WN38"/>
<dbReference type="UniPathway" id="UPA00251">
    <property type="reaction ID" value="UER00316"/>
</dbReference>
<dbReference type="Proteomes" id="UP000001567">
    <property type="component" value="Chromosome"/>
</dbReference>
<dbReference type="GO" id="GO:0008883">
    <property type="term" value="F:glutamyl-tRNA reductase activity"/>
    <property type="evidence" value="ECO:0007669"/>
    <property type="project" value="UniProtKB-UniRule"/>
</dbReference>
<dbReference type="GO" id="GO:0050661">
    <property type="term" value="F:NADP binding"/>
    <property type="evidence" value="ECO:0007669"/>
    <property type="project" value="InterPro"/>
</dbReference>
<dbReference type="GO" id="GO:0019353">
    <property type="term" value="P:protoporphyrinogen IX biosynthetic process from glutamate"/>
    <property type="evidence" value="ECO:0007669"/>
    <property type="project" value="TreeGrafter"/>
</dbReference>
<dbReference type="Gene3D" id="3.30.460.30">
    <property type="entry name" value="Glutamyl-tRNA reductase, N-terminal domain"/>
    <property type="match status" value="1"/>
</dbReference>
<dbReference type="Gene3D" id="3.40.50.720">
    <property type="entry name" value="NAD(P)-binding Rossmann-like Domain"/>
    <property type="match status" value="1"/>
</dbReference>
<dbReference type="HAMAP" id="MF_00087">
    <property type="entry name" value="Glu_tRNA_reductase"/>
    <property type="match status" value="1"/>
</dbReference>
<dbReference type="InterPro" id="IPR000343">
    <property type="entry name" value="4pyrrol_synth_GluRdtase"/>
</dbReference>
<dbReference type="InterPro" id="IPR015895">
    <property type="entry name" value="4pyrrol_synth_GluRdtase_N"/>
</dbReference>
<dbReference type="InterPro" id="IPR018214">
    <property type="entry name" value="GluRdtase_CS"/>
</dbReference>
<dbReference type="InterPro" id="IPR036453">
    <property type="entry name" value="GluRdtase_dimer_dom_sf"/>
</dbReference>
<dbReference type="InterPro" id="IPR036343">
    <property type="entry name" value="GluRdtase_N_sf"/>
</dbReference>
<dbReference type="InterPro" id="IPR036291">
    <property type="entry name" value="NAD(P)-bd_dom_sf"/>
</dbReference>
<dbReference type="InterPro" id="IPR006151">
    <property type="entry name" value="Shikm_DH/Glu-tRNA_Rdtase"/>
</dbReference>
<dbReference type="PANTHER" id="PTHR43013">
    <property type="entry name" value="GLUTAMYL-TRNA REDUCTASE"/>
    <property type="match status" value="1"/>
</dbReference>
<dbReference type="PANTHER" id="PTHR43013:SF1">
    <property type="entry name" value="GLUTAMYL-TRNA REDUCTASE"/>
    <property type="match status" value="1"/>
</dbReference>
<dbReference type="Pfam" id="PF05201">
    <property type="entry name" value="GlutR_N"/>
    <property type="match status" value="1"/>
</dbReference>
<dbReference type="Pfam" id="PF01488">
    <property type="entry name" value="Shikimate_DH"/>
    <property type="match status" value="1"/>
</dbReference>
<dbReference type="PIRSF" id="PIRSF000445">
    <property type="entry name" value="4pyrrol_synth_GluRdtase"/>
    <property type="match status" value="1"/>
</dbReference>
<dbReference type="SUPFAM" id="SSF69742">
    <property type="entry name" value="Glutamyl tRNA-reductase catalytic, N-terminal domain"/>
    <property type="match status" value="1"/>
</dbReference>
<dbReference type="SUPFAM" id="SSF69075">
    <property type="entry name" value="Glutamyl tRNA-reductase dimerization domain"/>
    <property type="match status" value="1"/>
</dbReference>
<dbReference type="SUPFAM" id="SSF51735">
    <property type="entry name" value="NAD(P)-binding Rossmann-fold domains"/>
    <property type="match status" value="1"/>
</dbReference>
<dbReference type="PROSITE" id="PS00747">
    <property type="entry name" value="GLUTR"/>
    <property type="match status" value="1"/>
</dbReference>
<name>HEM12_PYRAR</name>
<feature type="chain" id="PRO_0000335097" description="Glutamyl-tRNA reductase 2">
    <location>
        <begin position="1"/>
        <end position="403"/>
    </location>
</feature>
<feature type="active site" description="Nucleophile" evidence="1">
    <location>
        <position position="48"/>
    </location>
</feature>
<feature type="binding site" evidence="1">
    <location>
        <begin position="47"/>
        <end position="50"/>
    </location>
    <ligand>
        <name>substrate</name>
    </ligand>
</feature>
<feature type="binding site" evidence="1">
    <location>
        <position position="98"/>
    </location>
    <ligand>
        <name>substrate</name>
    </ligand>
</feature>
<feature type="binding site" evidence="1">
    <location>
        <begin position="103"/>
        <end position="105"/>
    </location>
    <ligand>
        <name>substrate</name>
    </ligand>
</feature>
<feature type="binding site" evidence="1">
    <location>
        <position position="109"/>
    </location>
    <ligand>
        <name>substrate</name>
    </ligand>
</feature>
<feature type="binding site" evidence="1">
    <location>
        <begin position="177"/>
        <end position="182"/>
    </location>
    <ligand>
        <name>NADP(+)</name>
        <dbReference type="ChEBI" id="CHEBI:58349"/>
    </ligand>
</feature>
<feature type="site" description="Important for activity" evidence="1">
    <location>
        <position position="88"/>
    </location>
</feature>
<accession>A4WN38</accession>
<comment type="function">
    <text evidence="1">Catalyzes the NADPH-dependent reduction of glutamyl-tRNA(Glu) to glutamate 1-semialdehyde (GSA).</text>
</comment>
<comment type="catalytic activity">
    <reaction evidence="1">
        <text>(S)-4-amino-5-oxopentanoate + tRNA(Glu) + NADP(+) = L-glutamyl-tRNA(Glu) + NADPH + H(+)</text>
        <dbReference type="Rhea" id="RHEA:12344"/>
        <dbReference type="Rhea" id="RHEA-COMP:9663"/>
        <dbReference type="Rhea" id="RHEA-COMP:9680"/>
        <dbReference type="ChEBI" id="CHEBI:15378"/>
        <dbReference type="ChEBI" id="CHEBI:57501"/>
        <dbReference type="ChEBI" id="CHEBI:57783"/>
        <dbReference type="ChEBI" id="CHEBI:58349"/>
        <dbReference type="ChEBI" id="CHEBI:78442"/>
        <dbReference type="ChEBI" id="CHEBI:78520"/>
        <dbReference type="EC" id="1.2.1.70"/>
    </reaction>
</comment>
<comment type="pathway">
    <text evidence="1">Porphyrin-containing compound metabolism; protoporphyrin-IX biosynthesis; 5-aminolevulinate from L-glutamyl-tRNA(Glu): step 1/2.</text>
</comment>
<comment type="subunit">
    <text evidence="1">Homodimer.</text>
</comment>
<comment type="domain">
    <text evidence="1">Possesses an unusual extended V-shaped dimeric structure with each monomer consisting of three distinct domains arranged along a curved 'spinal' alpha-helix. The N-terminal catalytic domain specifically recognizes the glutamate moiety of the substrate. The second domain is the NADPH-binding domain, and the third C-terminal domain is responsible for dimerization.</text>
</comment>
<comment type="miscellaneous">
    <text evidence="1">During catalysis, the active site Cys acts as a nucleophile attacking the alpha-carbonyl group of tRNA-bound glutamate with the formation of a thioester intermediate between enzyme and glutamate, and the concomitant release of tRNA(Glu). The thioester intermediate is finally reduced by direct hydride transfer from NADPH, to form the product GSA.</text>
</comment>
<comment type="similarity">
    <text evidence="1">Belongs to the glutamyl-tRNA reductase family.</text>
</comment>
<gene>
    <name evidence="1" type="primary">hemA2</name>
    <name type="ordered locus">Pars_2261</name>
</gene>
<evidence type="ECO:0000255" key="1">
    <source>
        <dbReference type="HAMAP-Rule" id="MF_00087"/>
    </source>
</evidence>
<organism>
    <name type="scientific">Pyrobaculum arsenaticum (strain DSM 13514 / JCM 11321 / PZ6)</name>
    <dbReference type="NCBI Taxonomy" id="340102"/>
    <lineage>
        <taxon>Archaea</taxon>
        <taxon>Thermoproteota</taxon>
        <taxon>Thermoprotei</taxon>
        <taxon>Thermoproteales</taxon>
        <taxon>Thermoproteaceae</taxon>
        <taxon>Pyrobaculum</taxon>
    </lineage>
</organism>
<sequence>MDLLSPLSAVILTYREADANALGRIGEEMRRCIEVIGPKTPMFVLHTCHRVEAYLYGASEEELSSLVERYKRHVESARILRGIEAARHLFRVAAGLESMLLGETDILGQLEEAYDRQVRAGFTRGLLKTVVERAVRVGKKVRTETGISRGPAGLGSLSIIYVSQFVDLKSAKVAVLGAGAVGAGLAKELAERGVAKLYILNRTLEKATEVAKKTGAEARPLTREEVERCLLECDVVFSAVHTLEYVIDMIPPGASVKVVVDLGVPQSVAPGLPIKVVRLSDLAELAQRYSALRKEEAKKAEAIVEEELEMLPKALAKRAVEEAVAEVMARAVEIAEEEGRRAGCEVAQLAAKTTVKRLLLPIVEELKKMAENGRVEHALEVSQIFTRLVGAPHGEPQNLKTVK</sequence>